<accession>Q03QP8</accession>
<protein>
    <recommendedName>
        <fullName evidence="1">Adenine phosphoribosyltransferase</fullName>
        <shortName evidence="1">APRT</shortName>
        <ecNumber evidence="1">2.4.2.7</ecNumber>
    </recommendedName>
</protein>
<feature type="chain" id="PRO_0000329350" description="Adenine phosphoribosyltransferase">
    <location>
        <begin position="1"/>
        <end position="172"/>
    </location>
</feature>
<sequence>MATDFTKYIASVPDYPEKGIMFRDISPLMADGQAFHAATDEIVAYAKDKDVEMVVGPEARGFIVGCPVAYEMGIGFAPARKEGKLPRETVKASYDLEYGQSALYLHKDAIKPGQKVLVTDDLLATGGTIGATIQLVEDLGGIVVGTAFLIELQDLHGRDKLKGYDIFSLMQY</sequence>
<evidence type="ECO:0000255" key="1">
    <source>
        <dbReference type="HAMAP-Rule" id="MF_00004"/>
    </source>
</evidence>
<reference key="1">
    <citation type="journal article" date="2006" name="Proc. Natl. Acad. Sci. U.S.A.">
        <title>Comparative genomics of the lactic acid bacteria.</title>
        <authorList>
            <person name="Makarova K.S."/>
            <person name="Slesarev A."/>
            <person name="Wolf Y.I."/>
            <person name="Sorokin A."/>
            <person name="Mirkin B."/>
            <person name="Koonin E.V."/>
            <person name="Pavlov A."/>
            <person name="Pavlova N."/>
            <person name="Karamychev V."/>
            <person name="Polouchine N."/>
            <person name="Shakhova V."/>
            <person name="Grigoriev I."/>
            <person name="Lou Y."/>
            <person name="Rohksar D."/>
            <person name="Lucas S."/>
            <person name="Huang K."/>
            <person name="Goodstein D.M."/>
            <person name="Hawkins T."/>
            <person name="Plengvidhya V."/>
            <person name="Welker D."/>
            <person name="Hughes J."/>
            <person name="Goh Y."/>
            <person name="Benson A."/>
            <person name="Baldwin K."/>
            <person name="Lee J.-H."/>
            <person name="Diaz-Muniz I."/>
            <person name="Dosti B."/>
            <person name="Smeianov V."/>
            <person name="Wechter W."/>
            <person name="Barabote R."/>
            <person name="Lorca G."/>
            <person name="Altermann E."/>
            <person name="Barrangou R."/>
            <person name="Ganesan B."/>
            <person name="Xie Y."/>
            <person name="Rawsthorne H."/>
            <person name="Tamir D."/>
            <person name="Parker C."/>
            <person name="Breidt F."/>
            <person name="Broadbent J.R."/>
            <person name="Hutkins R."/>
            <person name="O'Sullivan D."/>
            <person name="Steele J."/>
            <person name="Unlu G."/>
            <person name="Saier M.H. Jr."/>
            <person name="Klaenhammer T."/>
            <person name="Richardson P."/>
            <person name="Kozyavkin S."/>
            <person name="Weimer B.C."/>
            <person name="Mills D.A."/>
        </authorList>
    </citation>
    <scope>NUCLEOTIDE SEQUENCE [LARGE SCALE GENOMIC DNA]</scope>
    <source>
        <strain>ATCC 367 / BCRC 12310 / CIP 105137 / JCM 1170 / LMG 11437 / NCIMB 947 / NCTC 947</strain>
    </source>
</reference>
<name>APT_LEVBA</name>
<dbReference type="EC" id="2.4.2.7" evidence="1"/>
<dbReference type="EMBL" id="CP000416">
    <property type="protein sequence ID" value="ABJ64474.1"/>
    <property type="molecule type" value="Genomic_DNA"/>
</dbReference>
<dbReference type="RefSeq" id="WP_011668047.1">
    <property type="nucleotide sequence ID" value="NC_008497.1"/>
</dbReference>
<dbReference type="SMR" id="Q03QP8"/>
<dbReference type="STRING" id="387344.LVIS_1376"/>
<dbReference type="KEGG" id="lbr:LVIS_1376"/>
<dbReference type="PATRIC" id="fig|387344.15.peg.1312"/>
<dbReference type="eggNOG" id="COG0503">
    <property type="taxonomic scope" value="Bacteria"/>
</dbReference>
<dbReference type="HOGENOM" id="CLU_063339_3_0_9"/>
<dbReference type="UniPathway" id="UPA00588">
    <property type="reaction ID" value="UER00646"/>
</dbReference>
<dbReference type="Proteomes" id="UP000001652">
    <property type="component" value="Chromosome"/>
</dbReference>
<dbReference type="GO" id="GO:0005737">
    <property type="term" value="C:cytoplasm"/>
    <property type="evidence" value="ECO:0007669"/>
    <property type="project" value="UniProtKB-SubCell"/>
</dbReference>
<dbReference type="GO" id="GO:0002055">
    <property type="term" value="F:adenine binding"/>
    <property type="evidence" value="ECO:0007669"/>
    <property type="project" value="TreeGrafter"/>
</dbReference>
<dbReference type="GO" id="GO:0003999">
    <property type="term" value="F:adenine phosphoribosyltransferase activity"/>
    <property type="evidence" value="ECO:0007669"/>
    <property type="project" value="UniProtKB-UniRule"/>
</dbReference>
<dbReference type="GO" id="GO:0016208">
    <property type="term" value="F:AMP binding"/>
    <property type="evidence" value="ECO:0007669"/>
    <property type="project" value="TreeGrafter"/>
</dbReference>
<dbReference type="GO" id="GO:0006168">
    <property type="term" value="P:adenine salvage"/>
    <property type="evidence" value="ECO:0007669"/>
    <property type="project" value="InterPro"/>
</dbReference>
<dbReference type="GO" id="GO:0044209">
    <property type="term" value="P:AMP salvage"/>
    <property type="evidence" value="ECO:0007669"/>
    <property type="project" value="UniProtKB-UniRule"/>
</dbReference>
<dbReference type="GO" id="GO:0006166">
    <property type="term" value="P:purine ribonucleoside salvage"/>
    <property type="evidence" value="ECO:0007669"/>
    <property type="project" value="UniProtKB-KW"/>
</dbReference>
<dbReference type="CDD" id="cd06223">
    <property type="entry name" value="PRTases_typeI"/>
    <property type="match status" value="1"/>
</dbReference>
<dbReference type="FunFam" id="3.40.50.2020:FF:000004">
    <property type="entry name" value="Adenine phosphoribosyltransferase"/>
    <property type="match status" value="1"/>
</dbReference>
<dbReference type="Gene3D" id="3.40.50.2020">
    <property type="match status" value="1"/>
</dbReference>
<dbReference type="HAMAP" id="MF_00004">
    <property type="entry name" value="Aden_phosphoribosyltr"/>
    <property type="match status" value="1"/>
</dbReference>
<dbReference type="InterPro" id="IPR005764">
    <property type="entry name" value="Ade_phspho_trans"/>
</dbReference>
<dbReference type="InterPro" id="IPR000836">
    <property type="entry name" value="PRibTrfase_dom"/>
</dbReference>
<dbReference type="InterPro" id="IPR029057">
    <property type="entry name" value="PRTase-like"/>
</dbReference>
<dbReference type="InterPro" id="IPR050054">
    <property type="entry name" value="UPRTase/APRTase"/>
</dbReference>
<dbReference type="NCBIfam" id="TIGR01090">
    <property type="entry name" value="apt"/>
    <property type="match status" value="1"/>
</dbReference>
<dbReference type="NCBIfam" id="NF002633">
    <property type="entry name" value="PRK02304.1-2"/>
    <property type="match status" value="1"/>
</dbReference>
<dbReference type="NCBIfam" id="NF002634">
    <property type="entry name" value="PRK02304.1-3"/>
    <property type="match status" value="1"/>
</dbReference>
<dbReference type="NCBIfam" id="NF002636">
    <property type="entry name" value="PRK02304.1-5"/>
    <property type="match status" value="1"/>
</dbReference>
<dbReference type="PANTHER" id="PTHR32315">
    <property type="entry name" value="ADENINE PHOSPHORIBOSYLTRANSFERASE"/>
    <property type="match status" value="1"/>
</dbReference>
<dbReference type="PANTHER" id="PTHR32315:SF3">
    <property type="entry name" value="ADENINE PHOSPHORIBOSYLTRANSFERASE"/>
    <property type="match status" value="1"/>
</dbReference>
<dbReference type="Pfam" id="PF00156">
    <property type="entry name" value="Pribosyltran"/>
    <property type="match status" value="1"/>
</dbReference>
<dbReference type="SUPFAM" id="SSF53271">
    <property type="entry name" value="PRTase-like"/>
    <property type="match status" value="1"/>
</dbReference>
<proteinExistence type="inferred from homology"/>
<gene>
    <name evidence="1" type="primary">apt</name>
    <name type="ordered locus">LVIS_1376</name>
</gene>
<organism>
    <name type="scientific">Levilactobacillus brevis (strain ATCC 367 / BCRC 12310 / CIP 105137 / JCM 1170 / LMG 11437 / NCIMB 947 / NCTC 947)</name>
    <name type="common">Lactobacillus brevis</name>
    <dbReference type="NCBI Taxonomy" id="387344"/>
    <lineage>
        <taxon>Bacteria</taxon>
        <taxon>Bacillati</taxon>
        <taxon>Bacillota</taxon>
        <taxon>Bacilli</taxon>
        <taxon>Lactobacillales</taxon>
        <taxon>Lactobacillaceae</taxon>
        <taxon>Levilactobacillus</taxon>
    </lineage>
</organism>
<comment type="function">
    <text evidence="1">Catalyzes a salvage reaction resulting in the formation of AMP, that is energically less costly than de novo synthesis.</text>
</comment>
<comment type="catalytic activity">
    <reaction evidence="1">
        <text>AMP + diphosphate = 5-phospho-alpha-D-ribose 1-diphosphate + adenine</text>
        <dbReference type="Rhea" id="RHEA:16609"/>
        <dbReference type="ChEBI" id="CHEBI:16708"/>
        <dbReference type="ChEBI" id="CHEBI:33019"/>
        <dbReference type="ChEBI" id="CHEBI:58017"/>
        <dbReference type="ChEBI" id="CHEBI:456215"/>
        <dbReference type="EC" id="2.4.2.7"/>
    </reaction>
</comment>
<comment type="pathway">
    <text evidence="1">Purine metabolism; AMP biosynthesis via salvage pathway; AMP from adenine: step 1/1.</text>
</comment>
<comment type="subunit">
    <text evidence="1">Homodimer.</text>
</comment>
<comment type="subcellular location">
    <subcellularLocation>
        <location evidence="1">Cytoplasm</location>
    </subcellularLocation>
</comment>
<comment type="similarity">
    <text evidence="1">Belongs to the purine/pyrimidine phosphoribosyltransferase family.</text>
</comment>
<keyword id="KW-0963">Cytoplasm</keyword>
<keyword id="KW-0328">Glycosyltransferase</keyword>
<keyword id="KW-0660">Purine salvage</keyword>
<keyword id="KW-1185">Reference proteome</keyword>
<keyword id="KW-0808">Transferase</keyword>